<reference key="1">
    <citation type="journal article" date="2003" name="Mol. Microbiol.">
        <title>Genome-based analysis of virulence genes in a non-biofilm-forming Staphylococcus epidermidis strain (ATCC 12228).</title>
        <authorList>
            <person name="Zhang Y.-Q."/>
            <person name="Ren S.-X."/>
            <person name="Li H.-L."/>
            <person name="Wang Y.-X."/>
            <person name="Fu G."/>
            <person name="Yang J."/>
            <person name="Qin Z.-Q."/>
            <person name="Miao Y.-G."/>
            <person name="Wang W.-Y."/>
            <person name="Chen R.-S."/>
            <person name="Shen Y."/>
            <person name="Chen Z."/>
            <person name="Yuan Z.-H."/>
            <person name="Zhao G.-P."/>
            <person name="Qu D."/>
            <person name="Danchin A."/>
            <person name="Wen Y.-M."/>
        </authorList>
    </citation>
    <scope>NUCLEOTIDE SEQUENCE [LARGE SCALE GENOMIC DNA]</scope>
    <source>
        <strain>ATCC 12228 / FDA PCI 1200</strain>
    </source>
</reference>
<evidence type="ECO:0000255" key="1">
    <source>
        <dbReference type="HAMAP-Rule" id="MF_00017"/>
    </source>
</evidence>
<dbReference type="EMBL" id="AE015929">
    <property type="protein sequence ID" value="AAO05947.1"/>
    <property type="molecule type" value="Genomic_DNA"/>
</dbReference>
<dbReference type="RefSeq" id="NP_765860.1">
    <property type="nucleotide sequence ID" value="NC_004461.1"/>
</dbReference>
<dbReference type="RefSeq" id="WP_001829377.1">
    <property type="nucleotide sequence ID" value="NZ_WBME01000004.1"/>
</dbReference>
<dbReference type="SMR" id="Q8CMS3"/>
<dbReference type="GeneID" id="50019613"/>
<dbReference type="KEGG" id="sep:SE_2305"/>
<dbReference type="PATRIC" id="fig|176280.10.peg.2247"/>
<dbReference type="eggNOG" id="COG0353">
    <property type="taxonomic scope" value="Bacteria"/>
</dbReference>
<dbReference type="HOGENOM" id="CLU_060739_1_0_9"/>
<dbReference type="OrthoDB" id="9802672at2"/>
<dbReference type="Proteomes" id="UP000001411">
    <property type="component" value="Chromosome"/>
</dbReference>
<dbReference type="GO" id="GO:0003677">
    <property type="term" value="F:DNA binding"/>
    <property type="evidence" value="ECO:0007669"/>
    <property type="project" value="UniProtKB-UniRule"/>
</dbReference>
<dbReference type="GO" id="GO:0008270">
    <property type="term" value="F:zinc ion binding"/>
    <property type="evidence" value="ECO:0007669"/>
    <property type="project" value="UniProtKB-KW"/>
</dbReference>
<dbReference type="GO" id="GO:0006310">
    <property type="term" value="P:DNA recombination"/>
    <property type="evidence" value="ECO:0007669"/>
    <property type="project" value="UniProtKB-UniRule"/>
</dbReference>
<dbReference type="GO" id="GO:0006281">
    <property type="term" value="P:DNA repair"/>
    <property type="evidence" value="ECO:0007669"/>
    <property type="project" value="UniProtKB-UniRule"/>
</dbReference>
<dbReference type="CDD" id="cd01025">
    <property type="entry name" value="TOPRIM_recR"/>
    <property type="match status" value="1"/>
</dbReference>
<dbReference type="Gene3D" id="3.30.60.80">
    <property type="match status" value="1"/>
</dbReference>
<dbReference type="Gene3D" id="3.40.1360.10">
    <property type="match status" value="1"/>
</dbReference>
<dbReference type="Gene3D" id="6.10.250.240">
    <property type="match status" value="1"/>
</dbReference>
<dbReference type="Gene3D" id="1.10.8.420">
    <property type="entry name" value="RecR Domain 1"/>
    <property type="match status" value="1"/>
</dbReference>
<dbReference type="HAMAP" id="MF_00017">
    <property type="entry name" value="RecR"/>
    <property type="match status" value="1"/>
</dbReference>
<dbReference type="InterPro" id="IPR000093">
    <property type="entry name" value="DNA_Rcmb_RecR"/>
</dbReference>
<dbReference type="InterPro" id="IPR003583">
    <property type="entry name" value="Hlx-hairpin-Hlx_DNA-bd_motif"/>
</dbReference>
<dbReference type="InterPro" id="IPR023627">
    <property type="entry name" value="Rcmb_RecR"/>
</dbReference>
<dbReference type="InterPro" id="IPR015967">
    <property type="entry name" value="Rcmb_RecR_Znf"/>
</dbReference>
<dbReference type="InterPro" id="IPR006171">
    <property type="entry name" value="TOPRIM_dom"/>
</dbReference>
<dbReference type="InterPro" id="IPR034137">
    <property type="entry name" value="TOPRIM_RecR"/>
</dbReference>
<dbReference type="NCBIfam" id="TIGR00615">
    <property type="entry name" value="recR"/>
    <property type="match status" value="1"/>
</dbReference>
<dbReference type="PANTHER" id="PTHR30446">
    <property type="entry name" value="RECOMBINATION PROTEIN RECR"/>
    <property type="match status" value="1"/>
</dbReference>
<dbReference type="PANTHER" id="PTHR30446:SF0">
    <property type="entry name" value="RECOMBINATION PROTEIN RECR"/>
    <property type="match status" value="1"/>
</dbReference>
<dbReference type="Pfam" id="PF21175">
    <property type="entry name" value="RecR_C"/>
    <property type="match status" value="1"/>
</dbReference>
<dbReference type="Pfam" id="PF21176">
    <property type="entry name" value="RecR_HhH"/>
    <property type="match status" value="1"/>
</dbReference>
<dbReference type="Pfam" id="PF02132">
    <property type="entry name" value="RecR_ZnF"/>
    <property type="match status" value="1"/>
</dbReference>
<dbReference type="Pfam" id="PF13662">
    <property type="entry name" value="Toprim_4"/>
    <property type="match status" value="1"/>
</dbReference>
<dbReference type="SMART" id="SM00278">
    <property type="entry name" value="HhH1"/>
    <property type="match status" value="1"/>
</dbReference>
<dbReference type="SMART" id="SM00493">
    <property type="entry name" value="TOPRIM"/>
    <property type="match status" value="1"/>
</dbReference>
<dbReference type="SUPFAM" id="SSF111304">
    <property type="entry name" value="Recombination protein RecR"/>
    <property type="match status" value="1"/>
</dbReference>
<dbReference type="PROSITE" id="PS01300">
    <property type="entry name" value="RECR"/>
    <property type="match status" value="1"/>
</dbReference>
<dbReference type="PROSITE" id="PS50880">
    <property type="entry name" value="TOPRIM"/>
    <property type="match status" value="1"/>
</dbReference>
<protein>
    <recommendedName>
        <fullName evidence="1">Recombination protein RecR</fullName>
    </recommendedName>
</protein>
<organism>
    <name type="scientific">Staphylococcus epidermidis (strain ATCC 12228 / FDA PCI 1200)</name>
    <dbReference type="NCBI Taxonomy" id="176280"/>
    <lineage>
        <taxon>Bacteria</taxon>
        <taxon>Bacillati</taxon>
        <taxon>Bacillota</taxon>
        <taxon>Bacilli</taxon>
        <taxon>Bacillales</taxon>
        <taxon>Staphylococcaceae</taxon>
        <taxon>Staphylococcus</taxon>
    </lineage>
</organism>
<keyword id="KW-0227">DNA damage</keyword>
<keyword id="KW-0233">DNA recombination</keyword>
<keyword id="KW-0234">DNA repair</keyword>
<keyword id="KW-0479">Metal-binding</keyword>
<keyword id="KW-0862">Zinc</keyword>
<keyword id="KW-0863">Zinc-finger</keyword>
<accession>Q8CMS3</accession>
<sequence length="198" mass="22111">MHYPEPISKLIDSFMKLPGIGPKTAQRLAFHTLDMKEDDVVKFAKALVDVKRELTYCSVCGHITENDPCYICEDKQRDRSVICVVEDDKDVIAMEKMREYKGLYHVLHGSISPMDGIGPEDINIPALVERLKNDEVKELILAMNPNLEGESTAMYISRLVKPIGIKVTRLAQGLSVGGDLEYADEVTLSKAIAGRTEM</sequence>
<name>RECR_STAES</name>
<feature type="chain" id="PRO_0000190391" description="Recombination protein RecR">
    <location>
        <begin position="1"/>
        <end position="198"/>
    </location>
</feature>
<feature type="domain" description="Toprim" evidence="1">
    <location>
        <begin position="80"/>
        <end position="175"/>
    </location>
</feature>
<feature type="zinc finger region" description="C4-type" evidence="1">
    <location>
        <begin position="57"/>
        <end position="72"/>
    </location>
</feature>
<gene>
    <name evidence="1" type="primary">recR</name>
    <name type="ordered locus">SE_2305</name>
</gene>
<comment type="function">
    <text evidence="1">May play a role in DNA repair. It seems to be involved in an RecBC-independent recombinational process of DNA repair. It may act with RecF and RecO.</text>
</comment>
<comment type="similarity">
    <text evidence="1">Belongs to the RecR family.</text>
</comment>
<proteinExistence type="inferred from homology"/>